<dbReference type="EMBL" id="AABR06090287">
    <property type="status" value="NOT_ANNOTATED_CDS"/>
    <property type="molecule type" value="Genomic_DNA"/>
</dbReference>
<dbReference type="EMBL" id="CH474032">
    <property type="protein sequence ID" value="EDL93988.1"/>
    <property type="molecule type" value="Genomic_DNA"/>
</dbReference>
<dbReference type="RefSeq" id="NP_001102957.1">
    <property type="nucleotide sequence ID" value="NM_001109487.1"/>
</dbReference>
<dbReference type="SMR" id="M0RCP6"/>
<dbReference type="FunCoup" id="M0RCP6">
    <property type="interactions" value="206"/>
</dbReference>
<dbReference type="STRING" id="10116.ENSRNOP00000067371"/>
<dbReference type="PhosphoSitePlus" id="M0RCP6"/>
<dbReference type="PaxDb" id="10116-ENSRNOP00000067371"/>
<dbReference type="GeneID" id="685936"/>
<dbReference type="KEGG" id="rno:685936"/>
<dbReference type="AGR" id="RGD:1587838"/>
<dbReference type="CTD" id="345456"/>
<dbReference type="RGD" id="1587838">
    <property type="gene designation" value="Pfn3"/>
</dbReference>
<dbReference type="eggNOG" id="ENOG502S2A3">
    <property type="taxonomic scope" value="Eukaryota"/>
</dbReference>
<dbReference type="HOGENOM" id="CLU_123405_1_0_1"/>
<dbReference type="InParanoid" id="M0RCP6"/>
<dbReference type="OrthoDB" id="421374at2759"/>
<dbReference type="PRO" id="PR:M0RCP6"/>
<dbReference type="Proteomes" id="UP000002494">
    <property type="component" value="Chromosome 17"/>
</dbReference>
<dbReference type="Proteomes" id="UP000234681">
    <property type="component" value="Chromosome 17"/>
</dbReference>
<dbReference type="Bgee" id="ENSRNOG00000047752">
    <property type="expression patterns" value="Expressed in testis and 4 other cell types or tissues"/>
</dbReference>
<dbReference type="GO" id="GO:0005737">
    <property type="term" value="C:cytoplasm"/>
    <property type="evidence" value="ECO:0000318"/>
    <property type="project" value="GO_Central"/>
</dbReference>
<dbReference type="GO" id="GO:0005856">
    <property type="term" value="C:cytoskeleton"/>
    <property type="evidence" value="ECO:0007669"/>
    <property type="project" value="UniProtKB-SubCell"/>
</dbReference>
<dbReference type="GO" id="GO:0005634">
    <property type="term" value="C:nucleus"/>
    <property type="evidence" value="ECO:0007669"/>
    <property type="project" value="UniProtKB-SubCell"/>
</dbReference>
<dbReference type="GO" id="GO:0003779">
    <property type="term" value="F:actin binding"/>
    <property type="evidence" value="ECO:0000318"/>
    <property type="project" value="GO_Central"/>
</dbReference>
<dbReference type="GO" id="GO:0008289">
    <property type="term" value="F:lipid binding"/>
    <property type="evidence" value="ECO:0007669"/>
    <property type="project" value="UniProtKB-KW"/>
</dbReference>
<dbReference type="GO" id="GO:0030036">
    <property type="term" value="P:actin cytoskeleton organization"/>
    <property type="evidence" value="ECO:0007669"/>
    <property type="project" value="InterPro"/>
</dbReference>
<dbReference type="GO" id="GO:0032233">
    <property type="term" value="P:positive regulation of actin filament bundle assembly"/>
    <property type="evidence" value="ECO:0000318"/>
    <property type="project" value="GO_Central"/>
</dbReference>
<dbReference type="GO" id="GO:0030833">
    <property type="term" value="P:regulation of actin filament polymerization"/>
    <property type="evidence" value="ECO:0000318"/>
    <property type="project" value="GO_Central"/>
</dbReference>
<dbReference type="CDD" id="cd00148">
    <property type="entry name" value="PROF"/>
    <property type="match status" value="1"/>
</dbReference>
<dbReference type="FunFam" id="3.30.450.30:FF:000010">
    <property type="entry name" value="Profilin"/>
    <property type="match status" value="1"/>
</dbReference>
<dbReference type="Gene3D" id="3.30.450.30">
    <property type="entry name" value="Dynein light chain 2a, cytoplasmic"/>
    <property type="match status" value="1"/>
</dbReference>
<dbReference type="InterPro" id="IPR048278">
    <property type="entry name" value="PFN"/>
</dbReference>
<dbReference type="InterPro" id="IPR005455">
    <property type="entry name" value="PFN_euk"/>
</dbReference>
<dbReference type="InterPro" id="IPR036140">
    <property type="entry name" value="PFN_sf"/>
</dbReference>
<dbReference type="InterPro" id="IPR005454">
    <property type="entry name" value="Profilin1/2/3_vertebrate"/>
</dbReference>
<dbReference type="PANTHER" id="PTHR13936">
    <property type="entry name" value="PROFILIN"/>
    <property type="match status" value="1"/>
</dbReference>
<dbReference type="PANTHER" id="PTHR13936:SF2">
    <property type="entry name" value="PROFILIN-3"/>
    <property type="match status" value="1"/>
</dbReference>
<dbReference type="Pfam" id="PF00235">
    <property type="entry name" value="Profilin"/>
    <property type="match status" value="1"/>
</dbReference>
<dbReference type="PRINTS" id="PR01639">
    <property type="entry name" value="PROFILINMAML"/>
</dbReference>
<dbReference type="SMART" id="SM00392">
    <property type="entry name" value="PROF"/>
    <property type="match status" value="1"/>
</dbReference>
<dbReference type="SUPFAM" id="SSF55770">
    <property type="entry name" value="Profilin (actin-binding protein)"/>
    <property type="match status" value="1"/>
</dbReference>
<organism>
    <name type="scientific">Rattus norvegicus</name>
    <name type="common">Rat</name>
    <dbReference type="NCBI Taxonomy" id="10116"/>
    <lineage>
        <taxon>Eukaryota</taxon>
        <taxon>Metazoa</taxon>
        <taxon>Chordata</taxon>
        <taxon>Craniata</taxon>
        <taxon>Vertebrata</taxon>
        <taxon>Euteleostomi</taxon>
        <taxon>Mammalia</taxon>
        <taxon>Eutheria</taxon>
        <taxon>Euarchontoglires</taxon>
        <taxon>Glires</taxon>
        <taxon>Rodentia</taxon>
        <taxon>Myomorpha</taxon>
        <taxon>Muroidea</taxon>
        <taxon>Muridae</taxon>
        <taxon>Murinae</taxon>
        <taxon>Rattus</taxon>
    </lineage>
</organism>
<keyword id="KW-0009">Actin-binding</keyword>
<keyword id="KW-0963">Cytoplasm</keyword>
<keyword id="KW-0206">Cytoskeleton</keyword>
<keyword id="KW-0446">Lipid-binding</keyword>
<keyword id="KW-0539">Nucleus</keyword>
<keyword id="KW-1185">Reference proteome</keyword>
<feature type="chain" id="PRO_0000423633" description="Profilin-3">
    <location>
        <begin position="1"/>
        <end position="137"/>
    </location>
</feature>
<name>PROF3_RAT</name>
<protein>
    <recommendedName>
        <fullName>Profilin-3</fullName>
    </recommendedName>
    <alternativeName>
        <fullName>Profilin III</fullName>
    </alternativeName>
</protein>
<evidence type="ECO:0000250" key="1"/>
<evidence type="ECO:0000269" key="2">
    <source>
    </source>
</evidence>
<evidence type="ECO:0000269" key="3">
    <source>
    </source>
</evidence>
<evidence type="ECO:0000305" key="4"/>
<proteinExistence type="evidence at transcript level"/>
<comment type="function">
    <text evidence="1">Binds to actin and affects the structure of the cytoskeleton. Slightly reduces actin polymerization. Binds to poly-L-proline, phosphatidylinositol 3-phosphate (PtdIns(3)P), phosphatidylinositol 4,5-bisphosphate (PtdIns(4,5)P2), and phosphatidylinositol 4-phosphate (PtdIns(4)P). May be involved in spermatogenesis.</text>
</comment>
<comment type="subunit">
    <text evidence="1">Interacts with ACTRT3.</text>
</comment>
<comment type="subcellular location">
    <subcellularLocation>
        <location evidence="1">Cytoplasm</location>
        <location evidence="1">Cytoskeleton</location>
    </subcellularLocation>
    <subcellularLocation>
        <location evidence="3">Nucleus</location>
    </subcellularLocation>
    <subcellularLocation>
        <location evidence="3">Cytoplasm</location>
    </subcellularLocation>
    <text>Localizes first in the acroplaxome and later in the manchette during spermatid head development.</text>
</comment>
<comment type="tissue specificity">
    <text evidence="2">Detected in round spermatids.</text>
</comment>
<comment type="developmental stage">
    <text evidence="2 3">Expression coincides with the increasing numbers of round spermatids and decreases during the termination of the first spermatogenic cycle.</text>
</comment>
<comment type="similarity">
    <text evidence="4">Belongs to the profilin family.</text>
</comment>
<sequence length="137" mass="14667">MGDWKGYISAVLRDQRIDDVAIVGHSDNRCVWASRPGGLLAAISPQEVGVLTGPDRHTFLQTGLSVAGRRCCVIRDYLLAEGDGVLDARTKGLDGRAICVGHTPRALLVLMGRRGVHGGILNKTVHDLIGGLREQCS</sequence>
<accession>M0RCP6</accession>
<reference key="1">
    <citation type="journal article" date="2004" name="Nature">
        <title>Genome sequence of the Brown Norway rat yields insights into mammalian evolution.</title>
        <authorList>
            <person name="Gibbs R.A."/>
            <person name="Weinstock G.M."/>
            <person name="Metzker M.L."/>
            <person name="Muzny D.M."/>
            <person name="Sodergren E.J."/>
            <person name="Scherer S."/>
            <person name="Scott G."/>
            <person name="Steffen D."/>
            <person name="Worley K.C."/>
            <person name="Burch P.E."/>
            <person name="Okwuonu G."/>
            <person name="Hines S."/>
            <person name="Lewis L."/>
            <person name="Deramo C."/>
            <person name="Delgado O."/>
            <person name="Dugan-Rocha S."/>
            <person name="Miner G."/>
            <person name="Morgan M."/>
            <person name="Hawes A."/>
            <person name="Gill R."/>
            <person name="Holt R.A."/>
            <person name="Adams M.D."/>
            <person name="Amanatides P.G."/>
            <person name="Baden-Tillson H."/>
            <person name="Barnstead M."/>
            <person name="Chin S."/>
            <person name="Evans C.A."/>
            <person name="Ferriera S."/>
            <person name="Fosler C."/>
            <person name="Glodek A."/>
            <person name="Gu Z."/>
            <person name="Jennings D."/>
            <person name="Kraft C.L."/>
            <person name="Nguyen T."/>
            <person name="Pfannkoch C.M."/>
            <person name="Sitter C."/>
            <person name="Sutton G.G."/>
            <person name="Venter J.C."/>
            <person name="Woodage T."/>
            <person name="Smith D."/>
            <person name="Lee H.-M."/>
            <person name="Gustafson E."/>
            <person name="Cahill P."/>
            <person name="Kana A."/>
            <person name="Doucette-Stamm L."/>
            <person name="Weinstock K."/>
            <person name="Fechtel K."/>
            <person name="Weiss R.B."/>
            <person name="Dunn D.M."/>
            <person name="Green E.D."/>
            <person name="Blakesley R.W."/>
            <person name="Bouffard G.G."/>
            <person name="De Jong P.J."/>
            <person name="Osoegawa K."/>
            <person name="Zhu B."/>
            <person name="Marra M."/>
            <person name="Schein J."/>
            <person name="Bosdet I."/>
            <person name="Fjell C."/>
            <person name="Jones S."/>
            <person name="Krzywinski M."/>
            <person name="Mathewson C."/>
            <person name="Siddiqui A."/>
            <person name="Wye N."/>
            <person name="McPherson J."/>
            <person name="Zhao S."/>
            <person name="Fraser C.M."/>
            <person name="Shetty J."/>
            <person name="Shatsman S."/>
            <person name="Geer K."/>
            <person name="Chen Y."/>
            <person name="Abramzon S."/>
            <person name="Nierman W.C."/>
            <person name="Havlak P.H."/>
            <person name="Chen R."/>
            <person name="Durbin K.J."/>
            <person name="Egan A."/>
            <person name="Ren Y."/>
            <person name="Song X.-Z."/>
            <person name="Li B."/>
            <person name="Liu Y."/>
            <person name="Qin X."/>
            <person name="Cawley S."/>
            <person name="Cooney A.J."/>
            <person name="D'Souza L.M."/>
            <person name="Martin K."/>
            <person name="Wu J.Q."/>
            <person name="Gonzalez-Garay M.L."/>
            <person name="Jackson A.R."/>
            <person name="Kalafus K.J."/>
            <person name="McLeod M.P."/>
            <person name="Milosavljevic A."/>
            <person name="Virk D."/>
            <person name="Volkov A."/>
            <person name="Wheeler D.A."/>
            <person name="Zhang Z."/>
            <person name="Bailey J.A."/>
            <person name="Eichler E.E."/>
            <person name="Tuzun E."/>
            <person name="Birney E."/>
            <person name="Mongin E."/>
            <person name="Ureta-Vidal A."/>
            <person name="Woodwark C."/>
            <person name="Zdobnov E."/>
            <person name="Bork P."/>
            <person name="Suyama M."/>
            <person name="Torrents D."/>
            <person name="Alexandersson M."/>
            <person name="Trask B.J."/>
            <person name="Young J.M."/>
            <person name="Huang H."/>
            <person name="Wang H."/>
            <person name="Xing H."/>
            <person name="Daniels S."/>
            <person name="Gietzen D."/>
            <person name="Schmidt J."/>
            <person name="Stevens K."/>
            <person name="Vitt U."/>
            <person name="Wingrove J."/>
            <person name="Camara F."/>
            <person name="Mar Alba M."/>
            <person name="Abril J.F."/>
            <person name="Guigo R."/>
            <person name="Smit A."/>
            <person name="Dubchak I."/>
            <person name="Rubin E.M."/>
            <person name="Couronne O."/>
            <person name="Poliakov A."/>
            <person name="Huebner N."/>
            <person name="Ganten D."/>
            <person name="Goesele C."/>
            <person name="Hummel O."/>
            <person name="Kreitler T."/>
            <person name="Lee Y.-A."/>
            <person name="Monti J."/>
            <person name="Schulz H."/>
            <person name="Zimdahl H."/>
            <person name="Himmelbauer H."/>
            <person name="Lehrach H."/>
            <person name="Jacob H.J."/>
            <person name="Bromberg S."/>
            <person name="Gullings-Handley J."/>
            <person name="Jensen-Seaman M.I."/>
            <person name="Kwitek A.E."/>
            <person name="Lazar J."/>
            <person name="Pasko D."/>
            <person name="Tonellato P.J."/>
            <person name="Twigger S."/>
            <person name="Ponting C.P."/>
            <person name="Duarte J.M."/>
            <person name="Rice S."/>
            <person name="Goodstadt L."/>
            <person name="Beatson S.A."/>
            <person name="Emes R.D."/>
            <person name="Winter E.E."/>
            <person name="Webber C."/>
            <person name="Brandt P."/>
            <person name="Nyakatura G."/>
            <person name="Adetobi M."/>
            <person name="Chiaromonte F."/>
            <person name="Elnitski L."/>
            <person name="Eswara P."/>
            <person name="Hardison R.C."/>
            <person name="Hou M."/>
            <person name="Kolbe D."/>
            <person name="Makova K."/>
            <person name="Miller W."/>
            <person name="Nekrutenko A."/>
            <person name="Riemer C."/>
            <person name="Schwartz S."/>
            <person name="Taylor J."/>
            <person name="Yang S."/>
            <person name="Zhang Y."/>
            <person name="Lindpaintner K."/>
            <person name="Andrews T.D."/>
            <person name="Caccamo M."/>
            <person name="Clamp M."/>
            <person name="Clarke L."/>
            <person name="Curwen V."/>
            <person name="Durbin R.M."/>
            <person name="Eyras E."/>
            <person name="Searle S.M."/>
            <person name="Cooper G.M."/>
            <person name="Batzoglou S."/>
            <person name="Brudno M."/>
            <person name="Sidow A."/>
            <person name="Stone E.A."/>
            <person name="Payseur B.A."/>
            <person name="Bourque G."/>
            <person name="Lopez-Otin C."/>
            <person name="Puente X.S."/>
            <person name="Chakrabarti K."/>
            <person name="Chatterji S."/>
            <person name="Dewey C."/>
            <person name="Pachter L."/>
            <person name="Bray N."/>
            <person name="Yap V.B."/>
            <person name="Caspi A."/>
            <person name="Tesler G."/>
            <person name="Pevzner P.A."/>
            <person name="Haussler D."/>
            <person name="Roskin K.M."/>
            <person name="Baertsch R."/>
            <person name="Clawson H."/>
            <person name="Furey T.S."/>
            <person name="Hinrichs A.S."/>
            <person name="Karolchik D."/>
            <person name="Kent W.J."/>
            <person name="Rosenbloom K.R."/>
            <person name="Trumbower H."/>
            <person name="Weirauch M."/>
            <person name="Cooper D.N."/>
            <person name="Stenson P.D."/>
            <person name="Ma B."/>
            <person name="Brent M."/>
            <person name="Arumugam M."/>
            <person name="Shteynberg D."/>
            <person name="Copley R.R."/>
            <person name="Taylor M.S."/>
            <person name="Riethman H."/>
            <person name="Mudunuri U."/>
            <person name="Peterson J."/>
            <person name="Guyer M."/>
            <person name="Felsenfeld A."/>
            <person name="Old S."/>
            <person name="Mockrin S."/>
            <person name="Collins F.S."/>
        </authorList>
    </citation>
    <scope>NUCLEOTIDE SEQUENCE [LARGE SCALE GENOMIC DNA]</scope>
    <source>
        <strain>Brown Norway</strain>
    </source>
</reference>
<reference key="2">
    <citation type="submission" date="2005-07" db="EMBL/GenBank/DDBJ databases">
        <authorList>
            <person name="Mural R.J."/>
            <person name="Adams M.D."/>
            <person name="Myers E.W."/>
            <person name="Smith H.O."/>
            <person name="Venter J.C."/>
        </authorList>
    </citation>
    <scope>NUCLEOTIDE SEQUENCE [LARGE SCALE GENOMIC DNA]</scope>
</reference>
<reference key="3">
    <citation type="journal article" date="2005" name="Mol. Hum. Reprod.">
        <title>Novel testis-expressed profilin IV associated with acrosome biogenesis and spermatid elongation.</title>
        <authorList>
            <person name="Obermann H."/>
            <person name="Raabe I."/>
            <person name="Balvers M."/>
            <person name="Brunswig B."/>
            <person name="Schulze W."/>
            <person name="Kirchhoff C."/>
        </authorList>
    </citation>
    <scope>TISSUE SPECIFICITY</scope>
    <scope>DEVELOPMENTAL STAGE</scope>
    <source>
        <strain>Wistar</strain>
        <tissue>Testis</tissue>
    </source>
</reference>
<reference key="4">
    <citation type="journal article" date="2009" name="BMC Cell Biol.">
        <title>Testis-expressed profilins 3 and 4 show distinct functional characteristics and localize in the acroplaxome-manchette complex in spermatids.</title>
        <authorList>
            <person name="Behnen M."/>
            <person name="Murk K."/>
            <person name="Kursula P."/>
            <person name="Cappallo-Obermann H."/>
            <person name="Rothkegel M."/>
            <person name="Kierszenbaum A.L."/>
            <person name="Kirchhoff C."/>
        </authorList>
    </citation>
    <scope>SUBCELLULAR LOCATION</scope>
    <scope>DEVELOPMENTAL STAGE</scope>
</reference>
<gene>
    <name type="primary">Pfn3</name>
</gene>